<gene>
    <name type="ordered locus">ssl0461</name>
</gene>
<organism>
    <name type="scientific">Synechocystis sp. (strain ATCC 27184 / PCC 6803 / Kazusa)</name>
    <dbReference type="NCBI Taxonomy" id="1111708"/>
    <lineage>
        <taxon>Bacteria</taxon>
        <taxon>Bacillati</taxon>
        <taxon>Cyanobacteriota</taxon>
        <taxon>Cyanophyceae</taxon>
        <taxon>Synechococcales</taxon>
        <taxon>Merismopediaceae</taxon>
        <taxon>Synechocystis</taxon>
    </lineage>
</organism>
<proteinExistence type="predicted"/>
<keyword id="KW-1185">Reference proteome</keyword>
<sequence length="83" mass="9471">MSCRRLSTSGVLSMSVQNLSKQDVAALTAEDVAQLAQRLENDDYTDAFEGLRDWHLLRAIAFQREDLAEPYLYLLDNETYDEA</sequence>
<feature type="chain" id="PRO_0000157871" description="Uncharacterized protein ssl0461">
    <location>
        <begin position="1"/>
        <end position="83"/>
    </location>
</feature>
<accession>P73882</accession>
<dbReference type="EMBL" id="BA000022">
    <property type="protein sequence ID" value="BAA17945.1"/>
    <property type="molecule type" value="Genomic_DNA"/>
</dbReference>
<dbReference type="PIR" id="S75083">
    <property type="entry name" value="S75083"/>
</dbReference>
<dbReference type="STRING" id="1148.gene:10498814"/>
<dbReference type="PaxDb" id="1148-1653028"/>
<dbReference type="EnsemblBacteria" id="BAA17945">
    <property type="protein sequence ID" value="BAA17945"/>
    <property type="gene ID" value="BAA17945"/>
</dbReference>
<dbReference type="KEGG" id="syn:ssl0461"/>
<dbReference type="eggNOG" id="COG3536">
    <property type="taxonomic scope" value="Bacteria"/>
</dbReference>
<dbReference type="InParanoid" id="P73882"/>
<dbReference type="Proteomes" id="UP000001425">
    <property type="component" value="Chromosome"/>
</dbReference>
<dbReference type="InterPro" id="IPR019678">
    <property type="entry name" value="DUF2555"/>
</dbReference>
<dbReference type="Pfam" id="PF10742">
    <property type="entry name" value="DUF2555"/>
    <property type="match status" value="1"/>
</dbReference>
<reference key="1">
    <citation type="journal article" date="1996" name="DNA Res.">
        <title>Sequence analysis of the genome of the unicellular cyanobacterium Synechocystis sp. strain PCC6803. II. Sequence determination of the entire genome and assignment of potential protein-coding regions.</title>
        <authorList>
            <person name="Kaneko T."/>
            <person name="Sato S."/>
            <person name="Kotani H."/>
            <person name="Tanaka A."/>
            <person name="Asamizu E."/>
            <person name="Nakamura Y."/>
            <person name="Miyajima N."/>
            <person name="Hirosawa M."/>
            <person name="Sugiura M."/>
            <person name="Sasamoto S."/>
            <person name="Kimura T."/>
            <person name="Hosouchi T."/>
            <person name="Matsuno A."/>
            <person name="Muraki A."/>
            <person name="Nakazaki N."/>
            <person name="Naruo K."/>
            <person name="Okumura S."/>
            <person name="Shimpo S."/>
            <person name="Takeuchi C."/>
            <person name="Wada T."/>
            <person name="Watanabe A."/>
            <person name="Yamada M."/>
            <person name="Yasuda M."/>
            <person name="Tabata S."/>
        </authorList>
    </citation>
    <scope>NUCLEOTIDE SEQUENCE [LARGE SCALE GENOMIC DNA]</scope>
    <source>
        <strain>ATCC 27184 / PCC 6803 / Kazusa</strain>
    </source>
</reference>
<name>Y46S_SYNY3</name>
<protein>
    <recommendedName>
        <fullName>Uncharacterized protein ssl0461</fullName>
    </recommendedName>
</protein>